<accession>P23347</accession>
<reference key="1">
    <citation type="journal article" date="1990" name="J. Biol. Chem.">
        <title>cDNA cloning and tissue distribution of mRNAs for two proteins that are related to the band 3 Cl-/HCO3-exchanger.</title>
        <authorList>
            <person name="Kudrycki K.E."/>
            <person name="Newman P.R."/>
            <person name="Shull G.E."/>
        </authorList>
    </citation>
    <scope>NUCLEOTIDE SEQUENCE [MRNA]</scope>
    <source>
        <tissue>Stomach</tissue>
    </source>
</reference>
<reference key="2">
    <citation type="journal article" date="1990" name="Proc. Natl. Acad. Sci. U.S.A.">
        <title>Functional expression and subcellular localization of an anion exchanger cloned from choroid plexus.</title>
        <authorList>
            <person name="Lindsey A.E."/>
            <person name="Schneider K."/>
            <person name="Simmons D.M."/>
            <person name="Baron R."/>
            <person name="Lee B.S."/>
            <person name="Kopito R.R."/>
        </authorList>
    </citation>
    <scope>NUCLEOTIDE SEQUENCE [MRNA]</scope>
    <scope>FUNCTION</scope>
    <scope>TRANSPORTER ACTIVITY</scope>
    <scope>ACTIVITY REGULATION</scope>
    <scope>TISSUE SPECIFICITY</scope>
    <source>
        <tissue>Brain</tissue>
    </source>
</reference>
<reference key="3">
    <citation type="journal article" date="1999" name="Am. J. Physiol.">
        <title>Immunolocalization of anion exchanger AE2 and Na(+)-HCO(-)(3) cotransporter in rat parotid and submandibular glands.</title>
        <authorList>
            <person name="Roussa E."/>
            <person name="Romero M.F."/>
            <person name="Schmitt B.M."/>
            <person name="Boron W.F."/>
            <person name="Alper S.L."/>
            <person name="Thevenod F."/>
        </authorList>
    </citation>
    <scope>SUBCELLULAR LOCATION</scope>
    <scope>TISSUE SPECIFICITY</scope>
</reference>
<reference key="4">
    <citation type="journal article" date="2012" name="Nat. Commun.">
        <title>Quantitative maps of protein phosphorylation sites across 14 different rat organs and tissues.</title>
        <authorList>
            <person name="Lundby A."/>
            <person name="Secher A."/>
            <person name="Lage K."/>
            <person name="Nordsborg N.B."/>
            <person name="Dmytriyev A."/>
            <person name="Lundby C."/>
            <person name="Olsen J.V."/>
        </authorList>
    </citation>
    <scope>PHOSPHORYLATION [LARGE SCALE ANALYSIS] AT SER-145 AND THR-254</scope>
    <scope>IDENTIFICATION BY MASS SPECTROMETRY [LARGE SCALE ANALYSIS]</scope>
</reference>
<reference key="5">
    <citation type="journal article" date="1994" name="Am. J. Physiol.">
        <title>Immunolocalization of anion exchanger AE2 and cation exchanger NHE-1 in distinct adjacent cells of gastric mucosa.</title>
        <authorList>
            <person name="Stuart-Tilley A."/>
            <person name="Sardet C."/>
            <person name="Pouyssegur J."/>
            <person name="Schwartz M.A."/>
            <person name="Brown D."/>
            <person name="Alper S.L."/>
        </authorList>
    </citation>
    <scope>SUBCELLULAR LOCATION</scope>
    <scope>TISSUE SPECIFICITY</scope>
</reference>
<reference key="6">
    <citation type="journal article" date="2012" name="Histochem. Cell Biol.">
        <title>Guanylin and functional coupling proteins in the hepatobiliary system of rat and guinea pig.</title>
        <authorList>
            <person name="Schwabe K."/>
            <person name="Cetin Y."/>
        </authorList>
    </citation>
    <scope>SUBCELLULAR LOCATION</scope>
    <scope>TISSUE SPECIFICITY</scope>
</reference>
<proteinExistence type="evidence at protein level"/>
<keyword id="KW-0039">Anion exchange</keyword>
<keyword id="KW-0050">Antiport</keyword>
<keyword id="KW-1003">Cell membrane</keyword>
<keyword id="KW-0325">Glycoprotein</keyword>
<keyword id="KW-0406">Ion transport</keyword>
<keyword id="KW-0449">Lipoprotein</keyword>
<keyword id="KW-0472">Membrane</keyword>
<keyword id="KW-0488">Methylation</keyword>
<keyword id="KW-0564">Palmitate</keyword>
<keyword id="KW-0597">Phosphoprotein</keyword>
<keyword id="KW-1185">Reference proteome</keyword>
<keyword id="KW-0812">Transmembrane</keyword>
<keyword id="KW-1133">Transmembrane helix</keyword>
<keyword id="KW-0813">Transport</keyword>
<sequence>MSSAPRRPASGADSLHTPEPESLSPGTPGFPEQEEEDELRTLGVERFEEILQEAGSRGGEEPGRSYGEEDFEYHRQSSHHIHHPLSTHLPPDARRRKTPQGPGRKPRRRPGASPTGETPTIEEGEEDEDEVGEAEGFRAPPQQPSPASSPSAVQFFLQEDEGTDRKAERTSPSPPTQTPHQEAAPRASKGAQTGTLVEEMVAVASGTAGGDDGGAAGRPLTKAQPGHRSYNLQERRRIGSMTGVEQALLPRVPTDESEAQTLATADLDLMKSHRFEDVPGVRRHLVRKNAKGSTQAAREGREPGPTPRARPRAPHKPHEVFVELNELQLDKNQEPQWRETARWIKFEEDVEEETERWGKPHVASLSFRSLLELRRTLAHGAVLLDLDQQTLPGVAHQVVEQMVISDQIKAEDRANVLRALLLKHSHPSDEKEFSFPRNISAGSLGSLLGHHHAQGTESDPHVTEPLIGGVPETRLEVDRERELPPPAPPAGITRSKSKHELKLLEKIPENAEATVVLVGCVEFLSRPTMAFVRLREAVELDAVLEVPVPVRFLFLLLGPSSANMDYHEIGRSISTLMSDKQFHEAAYLADERDDLLTAINAFLDCSVVLPPSEVQGEELLRSVAHFQRQMLKKREEQGRLLPPGAGLEPKSAQDKALLQMVEVAGAAEDDPLRRTGRPFGGLIRDVRRRYPHYLSDFRDALDPQCLAAVIFIYFAALSPAITFGGLLGEKTQDLIGVSELIMSTALQGVIFCLLGAQPLLVIGFSGPLLVFEEAFFSFCKSNQLEYLVGRVWIGFWLVLLALLMVALEGSFLVRFVSRFTQEIFAFLISLIFIYETFYKLIKIFQEHPLHGCSVSNDSEADSSSNNMTWAATTLAPDNSSASGQERPRGQPNTALLSLVLMAGTFFIAFFLRKFKNSRFFPGRIRRVIGDFGVPIAILIMVLVDYSIEDTYTQKLSVPSGFSVTAPDKRGWVINPLGEKTPFPVWMMVASLLPAVLVFILIFMETQITTLIISKKERMLQKGSGFHLDLLLIVAMGGICALFGLPWLAAATVRSVTHANALTVMSKAVAPGDKPKIQEVKEQRVTGLLVALLVGLSMVIGDLLRQIPLAVLFGIFLYMGVTSLNGIQFYERLHLLLMPPKHHPDVTYVKKVRTMRMHLFTALQLLCLALLWAVMSTAASLAFPFILILTVPLRMVVLTRIFTEREMKCLDANEAEPVFDECEGVDEYNEMPMPV</sequence>
<protein>
    <recommendedName>
        <fullName>Anion exchange protein 2</fullName>
        <shortName>AE 2</shortName>
        <shortName>Anion exchanger 2</shortName>
    </recommendedName>
    <alternativeName>
        <fullName>Band 3-related protein 2</fullName>
        <shortName>B3RP-2</shortName>
    </alternativeName>
    <alternativeName>
        <fullName>Non-erythroid band 3-like protein</fullName>
    </alternativeName>
    <alternativeName>
        <fullName>Solute carrier family 4 member 2</fullName>
    </alternativeName>
</protein>
<name>B3A2_RAT</name>
<dbReference type="EMBL" id="J05166">
    <property type="protein sequence ID" value="AAA40799.1"/>
    <property type="molecule type" value="mRNA"/>
</dbReference>
<dbReference type="PIR" id="A34911">
    <property type="entry name" value="A34911"/>
</dbReference>
<dbReference type="RefSeq" id="NP_058744.1">
    <property type="nucleotide sequence ID" value="NM_017048.2"/>
</dbReference>
<dbReference type="RefSeq" id="XP_006235936.1">
    <property type="nucleotide sequence ID" value="XM_006235874.5"/>
</dbReference>
<dbReference type="RefSeq" id="XP_006235937.1">
    <property type="nucleotide sequence ID" value="XM_006235875.5"/>
</dbReference>
<dbReference type="RefSeq" id="XP_038962992.1">
    <property type="nucleotide sequence ID" value="XM_039107064.2"/>
</dbReference>
<dbReference type="RefSeq" id="XP_038962993.1">
    <property type="nucleotide sequence ID" value="XM_039107065.2"/>
</dbReference>
<dbReference type="SMR" id="P23347"/>
<dbReference type="BioGRID" id="246904">
    <property type="interactions" value="1"/>
</dbReference>
<dbReference type="FunCoup" id="P23347">
    <property type="interactions" value="1535"/>
</dbReference>
<dbReference type="IntAct" id="P23347">
    <property type="interactions" value="1"/>
</dbReference>
<dbReference type="STRING" id="10116.ENSRNOP00000019666"/>
<dbReference type="GlyCosmos" id="P23347">
    <property type="glycosylation" value="3 sites, No reported glycans"/>
</dbReference>
<dbReference type="GlyGen" id="P23347">
    <property type="glycosylation" value="4 sites"/>
</dbReference>
<dbReference type="iPTMnet" id="P23347"/>
<dbReference type="PhosphoSitePlus" id="P23347"/>
<dbReference type="PaxDb" id="10116-ENSRNOP00000019666"/>
<dbReference type="Ensembl" id="ENSRNOT00000019666.3">
    <property type="protein sequence ID" value="ENSRNOP00000019666.2"/>
    <property type="gene ID" value="ENSRNOG00000014347.6"/>
</dbReference>
<dbReference type="GeneID" id="24780"/>
<dbReference type="KEGG" id="rno:24780"/>
<dbReference type="AGR" id="RGD:3711"/>
<dbReference type="CTD" id="6522"/>
<dbReference type="RGD" id="3711">
    <property type="gene designation" value="Slc4a2"/>
</dbReference>
<dbReference type="eggNOG" id="KOG1172">
    <property type="taxonomic scope" value="Eukaryota"/>
</dbReference>
<dbReference type="GeneTree" id="ENSGT00940000158259"/>
<dbReference type="HOGENOM" id="CLU_002289_1_0_1"/>
<dbReference type="InParanoid" id="P23347"/>
<dbReference type="OMA" id="RYQRMPT"/>
<dbReference type="OrthoDB" id="1735926at2759"/>
<dbReference type="PhylomeDB" id="P23347"/>
<dbReference type="TreeFam" id="TF313630"/>
<dbReference type="Reactome" id="R-RNO-425381">
    <property type="pathway name" value="Bicarbonate transporters"/>
</dbReference>
<dbReference type="PRO" id="PR:P23347"/>
<dbReference type="Proteomes" id="UP000002494">
    <property type="component" value="Chromosome 4"/>
</dbReference>
<dbReference type="Bgee" id="ENSRNOG00000014347">
    <property type="expression patterns" value="Expressed in stomach and 19 other cell types or tissues"/>
</dbReference>
<dbReference type="GO" id="GO:0016324">
    <property type="term" value="C:apical plasma membrane"/>
    <property type="evidence" value="ECO:0000314"/>
    <property type="project" value="RGD"/>
</dbReference>
<dbReference type="GO" id="GO:0016323">
    <property type="term" value="C:basolateral plasma membrane"/>
    <property type="evidence" value="ECO:0000314"/>
    <property type="project" value="MGI"/>
</dbReference>
<dbReference type="GO" id="GO:0016020">
    <property type="term" value="C:membrane"/>
    <property type="evidence" value="ECO:0000266"/>
    <property type="project" value="RGD"/>
</dbReference>
<dbReference type="GO" id="GO:0005886">
    <property type="term" value="C:plasma membrane"/>
    <property type="evidence" value="ECO:0000318"/>
    <property type="project" value="GO_Central"/>
</dbReference>
<dbReference type="GO" id="GO:0015108">
    <property type="term" value="F:chloride transmembrane transporter activity"/>
    <property type="evidence" value="ECO:0000266"/>
    <property type="project" value="RGD"/>
</dbReference>
<dbReference type="GO" id="GO:0140900">
    <property type="term" value="F:chloride:bicarbonate antiporter activity"/>
    <property type="evidence" value="ECO:0000314"/>
    <property type="project" value="UniProtKB"/>
</dbReference>
<dbReference type="GO" id="GO:0019899">
    <property type="term" value="F:enzyme binding"/>
    <property type="evidence" value="ECO:0000353"/>
    <property type="project" value="RGD"/>
</dbReference>
<dbReference type="GO" id="GO:0097186">
    <property type="term" value="P:amelogenesis"/>
    <property type="evidence" value="ECO:0000266"/>
    <property type="project" value="RGD"/>
</dbReference>
<dbReference type="GO" id="GO:0015701">
    <property type="term" value="P:bicarbonate transport"/>
    <property type="evidence" value="ECO:0000318"/>
    <property type="project" value="GO_Central"/>
</dbReference>
<dbReference type="GO" id="GO:0006821">
    <property type="term" value="P:chloride transport"/>
    <property type="evidence" value="ECO:0000266"/>
    <property type="project" value="RGD"/>
</dbReference>
<dbReference type="GO" id="GO:0048565">
    <property type="term" value="P:digestive tract development"/>
    <property type="evidence" value="ECO:0000270"/>
    <property type="project" value="RGD"/>
</dbReference>
<dbReference type="GO" id="GO:0043377">
    <property type="term" value="P:negative regulation of CD8-positive, alpha-beta T cell differentiation"/>
    <property type="evidence" value="ECO:0000250"/>
    <property type="project" value="UniProtKB"/>
</dbReference>
<dbReference type="GO" id="GO:2000565">
    <property type="term" value="P:negative regulation of CD8-positive, alpha-beta T cell proliferation"/>
    <property type="evidence" value="ECO:0000250"/>
    <property type="project" value="UniProtKB"/>
</dbReference>
<dbReference type="GO" id="GO:0030316">
    <property type="term" value="P:osteoclast differentiation"/>
    <property type="evidence" value="ECO:0000250"/>
    <property type="project" value="UniProtKB"/>
</dbReference>
<dbReference type="GO" id="GO:0070175">
    <property type="term" value="P:positive regulation of enamel mineralization"/>
    <property type="evidence" value="ECO:0000266"/>
    <property type="project" value="RGD"/>
</dbReference>
<dbReference type="GO" id="GO:0032956">
    <property type="term" value="P:regulation of actin cytoskeleton organization"/>
    <property type="evidence" value="ECO:0000250"/>
    <property type="project" value="UniProtKB"/>
</dbReference>
<dbReference type="GO" id="GO:0045124">
    <property type="term" value="P:regulation of bone resorption"/>
    <property type="evidence" value="ECO:0000250"/>
    <property type="project" value="UniProtKB"/>
</dbReference>
<dbReference type="GO" id="GO:0051453">
    <property type="term" value="P:regulation of intracellular pH"/>
    <property type="evidence" value="ECO:0000315"/>
    <property type="project" value="RGD"/>
</dbReference>
<dbReference type="GO" id="GO:0007283">
    <property type="term" value="P:spermatogenesis"/>
    <property type="evidence" value="ECO:0000270"/>
    <property type="project" value="RGD"/>
</dbReference>
<dbReference type="GO" id="GO:0055085">
    <property type="term" value="P:transmembrane transport"/>
    <property type="evidence" value="ECO:0000318"/>
    <property type="project" value="GO_Central"/>
</dbReference>
<dbReference type="FunFam" id="1.10.287.570:FF:000001">
    <property type="entry name" value="Anion exchange protein"/>
    <property type="match status" value="1"/>
</dbReference>
<dbReference type="FunFam" id="3.40.930.10:FF:000004">
    <property type="entry name" value="Anion exchange protein"/>
    <property type="match status" value="1"/>
</dbReference>
<dbReference type="Gene3D" id="1.10.287.570">
    <property type="entry name" value="Helical hairpin bin"/>
    <property type="match status" value="1"/>
</dbReference>
<dbReference type="Gene3D" id="3.40.930.10">
    <property type="entry name" value="Mannitol-specific EII, Chain A"/>
    <property type="match status" value="1"/>
</dbReference>
<dbReference type="InterPro" id="IPR001717">
    <property type="entry name" value="Anion_exchange"/>
</dbReference>
<dbReference type="InterPro" id="IPR002978">
    <property type="entry name" value="Anion_exchange_2"/>
</dbReference>
<dbReference type="InterPro" id="IPR018241">
    <property type="entry name" value="Anion_exchange_CS"/>
</dbReference>
<dbReference type="InterPro" id="IPR013769">
    <property type="entry name" value="Band3_cytoplasmic_dom"/>
</dbReference>
<dbReference type="InterPro" id="IPR011531">
    <property type="entry name" value="HCO3_transpt-like_TM_dom"/>
</dbReference>
<dbReference type="InterPro" id="IPR003020">
    <property type="entry name" value="HCO3_transpt_euk"/>
</dbReference>
<dbReference type="InterPro" id="IPR016152">
    <property type="entry name" value="PTrfase/Anion_transptr"/>
</dbReference>
<dbReference type="NCBIfam" id="TIGR00834">
    <property type="entry name" value="ae"/>
    <property type="match status" value="1"/>
</dbReference>
<dbReference type="PANTHER" id="PTHR11453">
    <property type="entry name" value="ANION EXCHANGE PROTEIN"/>
    <property type="match status" value="1"/>
</dbReference>
<dbReference type="PANTHER" id="PTHR11453:SF14">
    <property type="entry name" value="ANION EXCHANGE PROTEIN 2"/>
    <property type="match status" value="1"/>
</dbReference>
<dbReference type="Pfam" id="PF07565">
    <property type="entry name" value="Band_3_cyto"/>
    <property type="match status" value="1"/>
</dbReference>
<dbReference type="Pfam" id="PF00955">
    <property type="entry name" value="HCO3_cotransp"/>
    <property type="match status" value="1"/>
</dbReference>
<dbReference type="PRINTS" id="PR00165">
    <property type="entry name" value="ANIONEXCHNGR"/>
</dbReference>
<dbReference type="PRINTS" id="PR01188">
    <property type="entry name" value="ANIONEXHNGR2"/>
</dbReference>
<dbReference type="PRINTS" id="PR01231">
    <property type="entry name" value="HCO3TRNSPORT"/>
</dbReference>
<dbReference type="SUPFAM" id="SSF55804">
    <property type="entry name" value="Phoshotransferase/anion transport protein"/>
    <property type="match status" value="1"/>
</dbReference>
<dbReference type="PROSITE" id="PS00219">
    <property type="entry name" value="ANION_EXCHANGER_1"/>
    <property type="match status" value="1"/>
</dbReference>
<dbReference type="PROSITE" id="PS00220">
    <property type="entry name" value="ANION_EXCHANGER_2"/>
    <property type="match status" value="1"/>
</dbReference>
<gene>
    <name type="primary">Slc4a2</name>
    <name type="synonym">Ae2</name>
    <name type="synonym">B3rp2</name>
</gene>
<evidence type="ECO:0000250" key="1"/>
<evidence type="ECO:0000250" key="2">
    <source>
        <dbReference type="UniProtKB" id="P04920"/>
    </source>
</evidence>
<evidence type="ECO:0000250" key="3">
    <source>
        <dbReference type="UniProtKB" id="P13808"/>
    </source>
</evidence>
<evidence type="ECO:0000255" key="4"/>
<evidence type="ECO:0000256" key="5">
    <source>
        <dbReference type="SAM" id="MobiDB-lite"/>
    </source>
</evidence>
<evidence type="ECO:0000269" key="6">
    <source>
    </source>
</evidence>
<evidence type="ECO:0000269" key="7">
    <source>
    </source>
</evidence>
<evidence type="ECO:0000269" key="8">
    <source>
    </source>
</evidence>
<evidence type="ECO:0000269" key="9">
    <source>
    </source>
</evidence>
<evidence type="ECO:0000305" key="10"/>
<evidence type="ECO:0007744" key="11">
    <source>
    </source>
</evidence>
<organism>
    <name type="scientific">Rattus norvegicus</name>
    <name type="common">Rat</name>
    <dbReference type="NCBI Taxonomy" id="10116"/>
    <lineage>
        <taxon>Eukaryota</taxon>
        <taxon>Metazoa</taxon>
        <taxon>Chordata</taxon>
        <taxon>Craniata</taxon>
        <taxon>Vertebrata</taxon>
        <taxon>Euteleostomi</taxon>
        <taxon>Mammalia</taxon>
        <taxon>Eutheria</taxon>
        <taxon>Euarchontoglires</taxon>
        <taxon>Glires</taxon>
        <taxon>Rodentia</taxon>
        <taxon>Myomorpha</taxon>
        <taxon>Muroidea</taxon>
        <taxon>Muridae</taxon>
        <taxon>Murinae</taxon>
        <taxon>Rattus</taxon>
    </lineage>
</organism>
<comment type="function">
    <text evidence="3 8">Sodium-independent anion exchanger which mediates the electroneutral exchange of chloride for bicarbonate ions across the cell membrane (PubMed:2371270). Plays an important role in osteoclast differentiation and function (By similarity). Regulates bone resorption and calpain-dependent actin cytoskeleton organization in osteoclasts via anion exchange-dependent control of pH (By similarity). Essential for intracellular pH regulation in CD8(+) T-cells upon CD3 stimulation, modulating CD8(+) T-cell responses (By similarity).</text>
</comment>
<comment type="catalytic activity">
    <reaction evidence="8">
        <text>hydrogencarbonate(in) + chloride(out) = hydrogencarbonate(out) + chloride(in)</text>
        <dbReference type="Rhea" id="RHEA:72363"/>
        <dbReference type="ChEBI" id="CHEBI:17544"/>
        <dbReference type="ChEBI" id="CHEBI:17996"/>
    </reaction>
</comment>
<comment type="activity regulation">
    <text evidence="8">Inhibited by 4,4'-diisothiocyanatostilbene-2,2'-disulfonic acid (DIDS).</text>
</comment>
<comment type="subcellular location">
    <subcellularLocation>
        <location evidence="7">Apical cell membrane</location>
        <topology evidence="4">Multi-pass membrane protein</topology>
    </subcellularLocation>
    <subcellularLocation>
        <location evidence="6 9">Basolateral cell membrane</location>
        <topology evidence="4">Multi-pass membrane protein</topology>
    </subcellularLocation>
</comment>
<comment type="tissue specificity">
    <text evidence="6 7 8 9">Expressed in the parotid and submandibular glands (at protein level) (PubMed:10600827). Expressed in the gastric mucosa (at protein level) (PubMed:8141271). Expressed in the choroid plexus epithelium (at protein level) (PubMed:2371270). Expressed in the liver and gallbladder (PubMed:22310983).</text>
</comment>
<comment type="similarity">
    <text evidence="10">Belongs to the anion exchanger (TC 2.A.31) family.</text>
</comment>
<feature type="chain" id="PRO_0000079218" description="Anion exchange protein 2">
    <location>
        <begin position="1"/>
        <end position="1234"/>
    </location>
</feature>
<feature type="topological domain" description="Cytoplasmic" evidence="4">
    <location>
        <begin position="1"/>
        <end position="704"/>
    </location>
</feature>
<feature type="transmembrane region" description="Helical" evidence="4">
    <location>
        <begin position="705"/>
        <end position="728"/>
    </location>
</feature>
<feature type="transmembrane region" description="Helical" evidence="4">
    <location>
        <begin position="734"/>
        <end position="771"/>
    </location>
</feature>
<feature type="transmembrane region" description="Helical" evidence="4">
    <location>
        <begin position="791"/>
        <end position="813"/>
    </location>
</feature>
<feature type="transmembrane region" description="Helical" evidence="4">
    <location>
        <begin position="823"/>
        <end position="843"/>
    </location>
</feature>
<feature type="topological domain" description="Extracellular" evidence="4">
    <location>
        <begin position="844"/>
        <end position="893"/>
    </location>
</feature>
<feature type="transmembrane region" description="Helical" evidence="4">
    <location>
        <begin position="894"/>
        <end position="911"/>
    </location>
</feature>
<feature type="topological domain" description="Cytoplasmic" evidence="4">
    <location>
        <begin position="912"/>
        <end position="926"/>
    </location>
</feature>
<feature type="transmembrane region" description="Helical" evidence="4">
    <location>
        <begin position="927"/>
        <end position="947"/>
    </location>
</feature>
<feature type="transmembrane region" description="Helical" evidence="4">
    <location>
        <begin position="981"/>
        <end position="1003"/>
    </location>
</feature>
<feature type="transmembrane region" description="Helical" evidence="4">
    <location>
        <begin position="1029"/>
        <end position="1050"/>
    </location>
</feature>
<feature type="transmembrane region" description="Helical" evidence="4">
    <location>
        <begin position="1084"/>
        <end position="1129"/>
    </location>
</feature>
<feature type="transmembrane region" description="Helical" evidence="4">
    <location>
        <begin position="1156"/>
        <end position="1192"/>
    </location>
</feature>
<feature type="region of interest" description="Disordered" evidence="5">
    <location>
        <begin position="1"/>
        <end position="239"/>
    </location>
</feature>
<feature type="region of interest" description="Disordered" evidence="5">
    <location>
        <begin position="287"/>
        <end position="315"/>
    </location>
</feature>
<feature type="region of interest" description="Disordered" evidence="5">
    <location>
        <begin position="446"/>
        <end position="467"/>
    </location>
</feature>
<feature type="region of interest" description="Membrane (anion exchange)">
    <location>
        <begin position="705"/>
        <end position="1234"/>
    </location>
</feature>
<feature type="compositionally biased region" description="Basic and acidic residues" evidence="5">
    <location>
        <begin position="39"/>
        <end position="49"/>
    </location>
</feature>
<feature type="compositionally biased region" description="Basic and acidic residues" evidence="5">
    <location>
        <begin position="58"/>
        <end position="75"/>
    </location>
</feature>
<feature type="compositionally biased region" description="Basic residues" evidence="5">
    <location>
        <begin position="76"/>
        <end position="85"/>
    </location>
</feature>
<feature type="compositionally biased region" description="Basic residues" evidence="5">
    <location>
        <begin position="94"/>
        <end position="110"/>
    </location>
</feature>
<feature type="compositionally biased region" description="Acidic residues" evidence="5">
    <location>
        <begin position="120"/>
        <end position="133"/>
    </location>
</feature>
<feature type="compositionally biased region" description="Gly residues" evidence="5">
    <location>
        <begin position="207"/>
        <end position="216"/>
    </location>
</feature>
<feature type="modified residue" description="Phosphoserine" evidence="2">
    <location>
        <position position="113"/>
    </location>
</feature>
<feature type="modified residue" description="Phosphoserine" evidence="11">
    <location>
        <position position="145"/>
    </location>
</feature>
<feature type="modified residue" description="Phosphoserine" evidence="3">
    <location>
        <position position="171"/>
    </location>
</feature>
<feature type="modified residue" description="Phosphoserine" evidence="3">
    <location>
        <position position="173"/>
    </location>
</feature>
<feature type="modified residue" description="Phosphoserine" evidence="2">
    <location>
        <position position="240"/>
    </location>
</feature>
<feature type="modified residue" description="Phosphothreonine" evidence="11">
    <location>
        <position position="254"/>
    </location>
</feature>
<feature type="modified residue" description="N6-methyllysine" evidence="2">
    <location>
        <position position="271"/>
    </location>
</feature>
<feature type="modified residue" description="Phosphoserine" evidence="2">
    <location>
        <position position="440"/>
    </location>
</feature>
<feature type="lipid moiety-binding region" description="S-palmitoyl cysteine" evidence="1">
    <location>
        <position position="1166"/>
    </location>
</feature>
<feature type="glycosylation site" description="N-linked (GlcNAc...) asparagine" evidence="4">
    <location>
        <position position="856"/>
    </location>
</feature>
<feature type="glycosylation site" description="N-linked (GlcNAc...) asparagine" evidence="4">
    <location>
        <position position="866"/>
    </location>
</feature>
<feature type="glycosylation site" description="N-linked (GlcNAc...) asparagine" evidence="4">
    <location>
        <position position="878"/>
    </location>
</feature>
<feature type="sequence conflict" description="In Ref. 2; no nucleotide entry." evidence="10" ref="2">
    <original>G</original>
    <variation>A</variation>
    <location>
        <position position="206"/>
    </location>
</feature>
<feature type="sequence conflict" description="In Ref. 2; no nucleotide entry." evidence="10" ref="2">
    <original>RR</original>
    <variation>PG</variation>
    <location>
        <begin position="925"/>
        <end position="926"/>
    </location>
</feature>
<feature type="sequence conflict" description="In Ref. 2; no nucleotide entry." evidence="10" ref="2">
    <original>ML</original>
    <variation>IV</variation>
    <location>
        <begin position="1018"/>
        <end position="1019"/>
    </location>
</feature>
<feature type="sequence conflict" description="In Ref. 2; no nucleotide entry." evidence="10" ref="2">
    <original>MH</original>
    <variation>ID</variation>
    <location>
        <begin position="1156"/>
        <end position="1157"/>
    </location>
</feature>